<reference key="1">
    <citation type="submission" date="2005-09" db="EMBL/GenBank/DDBJ databases">
        <title>Complete sequence of chromosome 1 of Rhodobacter sphaeroides 2.4.1.</title>
        <authorList>
            <person name="Copeland A."/>
            <person name="Lucas S."/>
            <person name="Lapidus A."/>
            <person name="Barry K."/>
            <person name="Detter J.C."/>
            <person name="Glavina T."/>
            <person name="Hammon N."/>
            <person name="Israni S."/>
            <person name="Pitluck S."/>
            <person name="Richardson P."/>
            <person name="Mackenzie C."/>
            <person name="Choudhary M."/>
            <person name="Larimer F."/>
            <person name="Hauser L.J."/>
            <person name="Land M."/>
            <person name="Donohue T.J."/>
            <person name="Kaplan S."/>
        </authorList>
    </citation>
    <scope>NUCLEOTIDE SEQUENCE [LARGE SCALE GENOMIC DNA]</scope>
    <source>
        <strain>ATCC 17023 / DSM 158 / JCM 6121 / CCUG 31486 / LMG 2827 / NBRC 12203 / NCIMB 8253 / ATH 2.4.1.</strain>
    </source>
</reference>
<proteinExistence type="inferred from homology"/>
<gene>
    <name evidence="2" type="primary">infB</name>
    <name type="ordered locus">RHOS4_27810</name>
    <name type="ORF">RSP_1165</name>
</gene>
<name>IF2_CERS4</name>
<feature type="chain" id="PRO_0000228235" description="Translation initiation factor IF-2">
    <location>
        <begin position="1"/>
        <end position="836"/>
    </location>
</feature>
<feature type="domain" description="tr-type G">
    <location>
        <begin position="333"/>
        <end position="501"/>
    </location>
</feature>
<feature type="region of interest" description="Disordered" evidence="3">
    <location>
        <begin position="1"/>
        <end position="233"/>
    </location>
</feature>
<feature type="region of interest" description="G1" evidence="1">
    <location>
        <begin position="342"/>
        <end position="349"/>
    </location>
</feature>
<feature type="region of interest" description="G2" evidence="1">
    <location>
        <begin position="367"/>
        <end position="371"/>
    </location>
</feature>
<feature type="region of interest" description="G3" evidence="1">
    <location>
        <begin position="389"/>
        <end position="392"/>
    </location>
</feature>
<feature type="region of interest" description="G4" evidence="1">
    <location>
        <begin position="443"/>
        <end position="446"/>
    </location>
</feature>
<feature type="region of interest" description="G5" evidence="1">
    <location>
        <begin position="479"/>
        <end position="481"/>
    </location>
</feature>
<feature type="compositionally biased region" description="Polar residues" evidence="3">
    <location>
        <begin position="18"/>
        <end position="27"/>
    </location>
</feature>
<feature type="compositionally biased region" description="Low complexity" evidence="3">
    <location>
        <begin position="50"/>
        <end position="60"/>
    </location>
</feature>
<feature type="compositionally biased region" description="Basic and acidic residues" evidence="3">
    <location>
        <begin position="88"/>
        <end position="156"/>
    </location>
</feature>
<feature type="compositionally biased region" description="Low complexity" evidence="3">
    <location>
        <begin position="167"/>
        <end position="176"/>
    </location>
</feature>
<feature type="compositionally biased region" description="Basic and acidic residues" evidence="3">
    <location>
        <begin position="185"/>
        <end position="206"/>
    </location>
</feature>
<feature type="binding site" evidence="2">
    <location>
        <begin position="342"/>
        <end position="349"/>
    </location>
    <ligand>
        <name>GTP</name>
        <dbReference type="ChEBI" id="CHEBI:37565"/>
    </ligand>
</feature>
<feature type="binding site" evidence="2">
    <location>
        <begin position="389"/>
        <end position="393"/>
    </location>
    <ligand>
        <name>GTP</name>
        <dbReference type="ChEBI" id="CHEBI:37565"/>
    </ligand>
</feature>
<feature type="binding site" evidence="2">
    <location>
        <begin position="443"/>
        <end position="446"/>
    </location>
    <ligand>
        <name>GTP</name>
        <dbReference type="ChEBI" id="CHEBI:37565"/>
    </ligand>
</feature>
<evidence type="ECO:0000250" key="1"/>
<evidence type="ECO:0000255" key="2">
    <source>
        <dbReference type="HAMAP-Rule" id="MF_00100"/>
    </source>
</evidence>
<evidence type="ECO:0000256" key="3">
    <source>
        <dbReference type="SAM" id="MobiDB-lite"/>
    </source>
</evidence>
<accession>Q3IYN5</accession>
<dbReference type="EMBL" id="CP000143">
    <property type="protein sequence ID" value="ABA80349.1"/>
    <property type="molecule type" value="Genomic_DNA"/>
</dbReference>
<dbReference type="RefSeq" id="WP_011338758.1">
    <property type="nucleotide sequence ID" value="NC_007493.2"/>
</dbReference>
<dbReference type="RefSeq" id="YP_354250.1">
    <property type="nucleotide sequence ID" value="NC_007493.2"/>
</dbReference>
<dbReference type="SMR" id="Q3IYN5"/>
<dbReference type="STRING" id="272943.RSP_1165"/>
<dbReference type="EnsemblBacteria" id="ABA80349">
    <property type="protein sequence ID" value="ABA80349"/>
    <property type="gene ID" value="RSP_1165"/>
</dbReference>
<dbReference type="GeneID" id="3718158"/>
<dbReference type="KEGG" id="rsp:RSP_1165"/>
<dbReference type="PATRIC" id="fig|272943.9.peg.3144"/>
<dbReference type="eggNOG" id="COG0532">
    <property type="taxonomic scope" value="Bacteria"/>
</dbReference>
<dbReference type="OrthoDB" id="9811804at2"/>
<dbReference type="PhylomeDB" id="Q3IYN5"/>
<dbReference type="Proteomes" id="UP000002703">
    <property type="component" value="Chromosome 1"/>
</dbReference>
<dbReference type="GO" id="GO:0005829">
    <property type="term" value="C:cytosol"/>
    <property type="evidence" value="ECO:0007669"/>
    <property type="project" value="TreeGrafter"/>
</dbReference>
<dbReference type="GO" id="GO:0005525">
    <property type="term" value="F:GTP binding"/>
    <property type="evidence" value="ECO:0007669"/>
    <property type="project" value="UniProtKB-KW"/>
</dbReference>
<dbReference type="GO" id="GO:0003924">
    <property type="term" value="F:GTPase activity"/>
    <property type="evidence" value="ECO:0007669"/>
    <property type="project" value="UniProtKB-UniRule"/>
</dbReference>
<dbReference type="GO" id="GO:0003743">
    <property type="term" value="F:translation initiation factor activity"/>
    <property type="evidence" value="ECO:0007669"/>
    <property type="project" value="UniProtKB-UniRule"/>
</dbReference>
<dbReference type="CDD" id="cd01887">
    <property type="entry name" value="IF2_eIF5B"/>
    <property type="match status" value="1"/>
</dbReference>
<dbReference type="CDD" id="cd03702">
    <property type="entry name" value="IF2_mtIF2_II"/>
    <property type="match status" value="1"/>
</dbReference>
<dbReference type="CDD" id="cd03692">
    <property type="entry name" value="mtIF2_IVc"/>
    <property type="match status" value="1"/>
</dbReference>
<dbReference type="FunFam" id="2.40.30.10:FF:000007">
    <property type="entry name" value="Translation initiation factor IF-2"/>
    <property type="match status" value="1"/>
</dbReference>
<dbReference type="FunFam" id="2.40.30.10:FF:000008">
    <property type="entry name" value="Translation initiation factor IF-2"/>
    <property type="match status" value="1"/>
</dbReference>
<dbReference type="FunFam" id="3.40.50.10050:FF:000001">
    <property type="entry name" value="Translation initiation factor IF-2"/>
    <property type="match status" value="1"/>
</dbReference>
<dbReference type="FunFam" id="3.40.50.300:FF:000019">
    <property type="entry name" value="Translation initiation factor IF-2"/>
    <property type="match status" value="1"/>
</dbReference>
<dbReference type="Gene3D" id="3.40.50.300">
    <property type="entry name" value="P-loop containing nucleotide triphosphate hydrolases"/>
    <property type="match status" value="1"/>
</dbReference>
<dbReference type="Gene3D" id="2.40.30.10">
    <property type="entry name" value="Translation factors"/>
    <property type="match status" value="2"/>
</dbReference>
<dbReference type="Gene3D" id="3.40.50.10050">
    <property type="entry name" value="Translation initiation factor IF- 2, domain 3"/>
    <property type="match status" value="1"/>
</dbReference>
<dbReference type="HAMAP" id="MF_00100_B">
    <property type="entry name" value="IF_2_B"/>
    <property type="match status" value="1"/>
</dbReference>
<dbReference type="InterPro" id="IPR053905">
    <property type="entry name" value="EF-G-like_DII"/>
</dbReference>
<dbReference type="InterPro" id="IPR013575">
    <property type="entry name" value="IF2_assoc_dom_bac"/>
</dbReference>
<dbReference type="InterPro" id="IPR044145">
    <property type="entry name" value="IF2_II"/>
</dbReference>
<dbReference type="InterPro" id="IPR006847">
    <property type="entry name" value="IF2_N"/>
</dbReference>
<dbReference type="InterPro" id="IPR027417">
    <property type="entry name" value="P-loop_NTPase"/>
</dbReference>
<dbReference type="InterPro" id="IPR005225">
    <property type="entry name" value="Small_GTP-bd"/>
</dbReference>
<dbReference type="InterPro" id="IPR000795">
    <property type="entry name" value="T_Tr_GTP-bd_dom"/>
</dbReference>
<dbReference type="InterPro" id="IPR000178">
    <property type="entry name" value="TF_IF2_bacterial-like"/>
</dbReference>
<dbReference type="InterPro" id="IPR015760">
    <property type="entry name" value="TIF_IF2"/>
</dbReference>
<dbReference type="InterPro" id="IPR023115">
    <property type="entry name" value="TIF_IF2_dom3"/>
</dbReference>
<dbReference type="InterPro" id="IPR036925">
    <property type="entry name" value="TIF_IF2_dom3_sf"/>
</dbReference>
<dbReference type="InterPro" id="IPR009000">
    <property type="entry name" value="Transl_B-barrel_sf"/>
</dbReference>
<dbReference type="NCBIfam" id="TIGR00487">
    <property type="entry name" value="IF-2"/>
    <property type="match status" value="1"/>
</dbReference>
<dbReference type="NCBIfam" id="TIGR00231">
    <property type="entry name" value="small_GTP"/>
    <property type="match status" value="1"/>
</dbReference>
<dbReference type="PANTHER" id="PTHR43381:SF5">
    <property type="entry name" value="TR-TYPE G DOMAIN-CONTAINING PROTEIN"/>
    <property type="match status" value="1"/>
</dbReference>
<dbReference type="PANTHER" id="PTHR43381">
    <property type="entry name" value="TRANSLATION INITIATION FACTOR IF-2-RELATED"/>
    <property type="match status" value="1"/>
</dbReference>
<dbReference type="Pfam" id="PF22042">
    <property type="entry name" value="EF-G_D2"/>
    <property type="match status" value="1"/>
</dbReference>
<dbReference type="Pfam" id="PF00009">
    <property type="entry name" value="GTP_EFTU"/>
    <property type="match status" value="1"/>
</dbReference>
<dbReference type="Pfam" id="PF11987">
    <property type="entry name" value="IF-2"/>
    <property type="match status" value="1"/>
</dbReference>
<dbReference type="Pfam" id="PF08364">
    <property type="entry name" value="IF2_assoc"/>
    <property type="match status" value="1"/>
</dbReference>
<dbReference type="Pfam" id="PF04760">
    <property type="entry name" value="IF2_N"/>
    <property type="match status" value="1"/>
</dbReference>
<dbReference type="SUPFAM" id="SSF52156">
    <property type="entry name" value="Initiation factor IF2/eIF5b, domain 3"/>
    <property type="match status" value="1"/>
</dbReference>
<dbReference type="SUPFAM" id="SSF52540">
    <property type="entry name" value="P-loop containing nucleoside triphosphate hydrolases"/>
    <property type="match status" value="1"/>
</dbReference>
<dbReference type="SUPFAM" id="SSF50447">
    <property type="entry name" value="Translation proteins"/>
    <property type="match status" value="2"/>
</dbReference>
<dbReference type="PROSITE" id="PS51722">
    <property type="entry name" value="G_TR_2"/>
    <property type="match status" value="1"/>
</dbReference>
<dbReference type="PROSITE" id="PS01176">
    <property type="entry name" value="IF2"/>
    <property type="match status" value="1"/>
</dbReference>
<protein>
    <recommendedName>
        <fullName evidence="2">Translation initiation factor IF-2</fullName>
    </recommendedName>
</protein>
<keyword id="KW-0963">Cytoplasm</keyword>
<keyword id="KW-0342">GTP-binding</keyword>
<keyword id="KW-0396">Initiation factor</keyword>
<keyword id="KW-0547">Nucleotide-binding</keyword>
<keyword id="KW-0648">Protein biosynthesis</keyword>
<keyword id="KW-1185">Reference proteome</keyword>
<sequence length="836" mass="90924">MSDTDGKKPLGLGGGSRSGQVKQSFSHGRTKSVLVETKRKRVVVPKPGASGSSTTTSSPSHLGDPAKRPAGISDAEMERRLAALRAAKLREVEDAKRRADEERQREEERQRRREELEAKEREERERAEALRQKAEDEERARREAEEAARRAEEAKRAPAPAAPQPAPAESRASAPPSAKPGLPPSRKEREREADRDRTTKKDDSRRSGKLTLNEALSGEGGRTRSLAAMKRKQEKARQKAMGFGHKAEKQVRDVQLPETILVQELANRMAERAADVVKALMKMGMMVTMNQSIDADTAELVIEEFGHRAVRVSDADVEHVIDTVEDKAEDLQPRPPIITIMGHVDHGKTSLLDAIRKTSVVSGEAGGITQHIGAYQVKTESGAVLTFLDTPGHAAFTSMRARGAQVTDIVVLVVAADDAVMPQTVEAIKHAKAAKVPMIVAINKIDKPDADPNKVRTDLLQHEVIVEKMSGDVLDVEVSAKTGLGLDELLENIALQAEILDLRANPSRQAQGAVIEAKLDVGRGPVATVLVQYGTLKRGDIFVVGQQWGKVRALINDKGERVDEAGPSVPVEVLGLNGTPEAGDVLNVVETEAQAREIADYREKAARDKRAAAGAATTLEQLMAKAKADADVAELPVVIKADVQGSAEAIVQALEKVGNDEVRVRVLHYGVGAITETDITLAEASQAAVIGFNVRANASARQAANQKSVEIRYYSVIYDLVDDVKKAASGLLKAEVREHFIGYAQIKEVFRITGVGNVAGCIVTEGVARRSAGVRLLRDNIVIHEGTLKTLKRFKDEVKEVQSGQECGMAFERYEDIRPGDVIEIFEREEVQRKLA</sequence>
<comment type="function">
    <text evidence="2">One of the essential components for the initiation of protein synthesis. Protects formylmethionyl-tRNA from spontaneous hydrolysis and promotes its binding to the 30S ribosomal subunits. Also involved in the hydrolysis of GTP during the formation of the 70S ribosomal complex.</text>
</comment>
<comment type="subcellular location">
    <subcellularLocation>
        <location evidence="2">Cytoplasm</location>
    </subcellularLocation>
</comment>
<comment type="similarity">
    <text evidence="2">Belongs to the TRAFAC class translation factor GTPase superfamily. Classic translation factor GTPase family. IF-2 subfamily.</text>
</comment>
<organism>
    <name type="scientific">Cereibacter sphaeroides (strain ATCC 17023 / DSM 158 / JCM 6121 / CCUG 31486 / LMG 2827 / NBRC 12203 / NCIMB 8253 / ATH 2.4.1.)</name>
    <name type="common">Rhodobacter sphaeroides</name>
    <dbReference type="NCBI Taxonomy" id="272943"/>
    <lineage>
        <taxon>Bacteria</taxon>
        <taxon>Pseudomonadati</taxon>
        <taxon>Pseudomonadota</taxon>
        <taxon>Alphaproteobacteria</taxon>
        <taxon>Rhodobacterales</taxon>
        <taxon>Paracoccaceae</taxon>
        <taxon>Cereibacter</taxon>
    </lineage>
</organism>